<gene>
    <name evidence="1" type="primary">infC</name>
    <name type="ordered locus">PP_2466</name>
</gene>
<evidence type="ECO:0000255" key="1">
    <source>
        <dbReference type="HAMAP-Rule" id="MF_00080"/>
    </source>
</evidence>
<evidence type="ECO:0000305" key="2"/>
<accession>Q88K26</accession>
<organism>
    <name type="scientific">Pseudomonas putida (strain ATCC 47054 / DSM 6125 / CFBP 8728 / NCIMB 11950 / KT2440)</name>
    <dbReference type="NCBI Taxonomy" id="160488"/>
    <lineage>
        <taxon>Bacteria</taxon>
        <taxon>Pseudomonadati</taxon>
        <taxon>Pseudomonadota</taxon>
        <taxon>Gammaproteobacteria</taxon>
        <taxon>Pseudomonadales</taxon>
        <taxon>Pseudomonadaceae</taxon>
        <taxon>Pseudomonas</taxon>
    </lineage>
</organism>
<reference key="1">
    <citation type="journal article" date="2002" name="Environ. Microbiol.">
        <title>Complete genome sequence and comparative analysis of the metabolically versatile Pseudomonas putida KT2440.</title>
        <authorList>
            <person name="Nelson K.E."/>
            <person name="Weinel C."/>
            <person name="Paulsen I.T."/>
            <person name="Dodson R.J."/>
            <person name="Hilbert H."/>
            <person name="Martins dos Santos V.A.P."/>
            <person name="Fouts D.E."/>
            <person name="Gill S.R."/>
            <person name="Pop M."/>
            <person name="Holmes M."/>
            <person name="Brinkac L.M."/>
            <person name="Beanan M.J."/>
            <person name="DeBoy R.T."/>
            <person name="Daugherty S.C."/>
            <person name="Kolonay J.F."/>
            <person name="Madupu R."/>
            <person name="Nelson W.C."/>
            <person name="White O."/>
            <person name="Peterson J.D."/>
            <person name="Khouri H.M."/>
            <person name="Hance I."/>
            <person name="Chris Lee P."/>
            <person name="Holtzapple E.K."/>
            <person name="Scanlan D."/>
            <person name="Tran K."/>
            <person name="Moazzez A."/>
            <person name="Utterback T.R."/>
            <person name="Rizzo M."/>
            <person name="Lee K."/>
            <person name="Kosack D."/>
            <person name="Moestl D."/>
            <person name="Wedler H."/>
            <person name="Lauber J."/>
            <person name="Stjepandic D."/>
            <person name="Hoheisel J."/>
            <person name="Straetz M."/>
            <person name="Heim S."/>
            <person name="Kiewitz C."/>
            <person name="Eisen J.A."/>
            <person name="Timmis K.N."/>
            <person name="Duesterhoeft A."/>
            <person name="Tuemmler B."/>
            <person name="Fraser C.M."/>
        </authorList>
    </citation>
    <scope>NUCLEOTIDE SEQUENCE [LARGE SCALE GENOMIC DNA]</scope>
    <source>
        <strain>ATCC 47054 / DSM 6125 / CFBP 8728 / NCIMB 11950 / KT2440</strain>
    </source>
</reference>
<sequence length="183" mass="20879">MTIKREMRNDKRAVPKAPINENISAREVRLIGADGEQVGIVSIDEALRIADEAKLDLVEISADAVPPVCKVMDYGKHLFEKKKQANEAKKNQKQIQIKEIKFRPGTEDGDYQVKLRNLVRFLTDGDKAKISLRFRGREMAHQELGMELLKRVEADLAEYGTVEQHPKMEGRQLMMVIAPKKKK</sequence>
<name>IF3_PSEPK</name>
<feature type="chain" id="PRO_0000177559" description="Translation initiation factor IF-3">
    <location>
        <begin position="1"/>
        <end position="183"/>
    </location>
</feature>
<keyword id="KW-0963">Cytoplasm</keyword>
<keyword id="KW-0396">Initiation factor</keyword>
<keyword id="KW-0648">Protein biosynthesis</keyword>
<keyword id="KW-1185">Reference proteome</keyword>
<comment type="function">
    <text evidence="1">IF-3 binds to the 30S ribosomal subunit and shifts the equilibrium between 70S ribosomes and their 50S and 30S subunits in favor of the free subunits, thus enhancing the availability of 30S subunits on which protein synthesis initiation begins.</text>
</comment>
<comment type="subunit">
    <text evidence="1">Monomer.</text>
</comment>
<comment type="subcellular location">
    <subcellularLocation>
        <location evidence="1">Cytoplasm</location>
    </subcellularLocation>
</comment>
<comment type="similarity">
    <text evidence="1">Belongs to the IF-3 family.</text>
</comment>
<comment type="sequence caution" evidence="2">
    <conflict type="erroneous initiation">
        <sequence resource="EMBL-CDS" id="AAN68078"/>
    </conflict>
</comment>
<protein>
    <recommendedName>
        <fullName evidence="1">Translation initiation factor IF-3</fullName>
    </recommendedName>
</protein>
<proteinExistence type="inferred from homology"/>
<dbReference type="EMBL" id="AE015451">
    <property type="protein sequence ID" value="AAN68078.1"/>
    <property type="status" value="ALT_INIT"/>
    <property type="molecule type" value="Genomic_DNA"/>
</dbReference>
<dbReference type="RefSeq" id="NP_744614.1">
    <property type="nucleotide sequence ID" value="NC_002947.4"/>
</dbReference>
<dbReference type="SMR" id="Q88K26"/>
<dbReference type="STRING" id="160488.PP_2466"/>
<dbReference type="PaxDb" id="160488-PP_2466"/>
<dbReference type="KEGG" id="ppu:PP_2466"/>
<dbReference type="PATRIC" id="fig|160488.4.peg.2612"/>
<dbReference type="eggNOG" id="COG0290">
    <property type="taxonomic scope" value="Bacteria"/>
</dbReference>
<dbReference type="HOGENOM" id="CLU_054919_3_2_6"/>
<dbReference type="OrthoDB" id="9806014at2"/>
<dbReference type="PhylomeDB" id="Q88K26"/>
<dbReference type="Proteomes" id="UP000000556">
    <property type="component" value="Chromosome"/>
</dbReference>
<dbReference type="GO" id="GO:0005829">
    <property type="term" value="C:cytosol"/>
    <property type="evidence" value="ECO:0007669"/>
    <property type="project" value="TreeGrafter"/>
</dbReference>
<dbReference type="GO" id="GO:0016020">
    <property type="term" value="C:membrane"/>
    <property type="evidence" value="ECO:0007669"/>
    <property type="project" value="TreeGrafter"/>
</dbReference>
<dbReference type="GO" id="GO:0043022">
    <property type="term" value="F:ribosome binding"/>
    <property type="evidence" value="ECO:0007669"/>
    <property type="project" value="TreeGrafter"/>
</dbReference>
<dbReference type="GO" id="GO:0003743">
    <property type="term" value="F:translation initiation factor activity"/>
    <property type="evidence" value="ECO:0007669"/>
    <property type="project" value="UniProtKB-UniRule"/>
</dbReference>
<dbReference type="GO" id="GO:0032790">
    <property type="term" value="P:ribosome disassembly"/>
    <property type="evidence" value="ECO:0007669"/>
    <property type="project" value="TreeGrafter"/>
</dbReference>
<dbReference type="FunFam" id="3.10.20.80:FF:000001">
    <property type="entry name" value="Translation initiation factor IF-3"/>
    <property type="match status" value="1"/>
</dbReference>
<dbReference type="FunFam" id="3.30.110.10:FF:000001">
    <property type="entry name" value="Translation initiation factor IF-3"/>
    <property type="match status" value="1"/>
</dbReference>
<dbReference type="Gene3D" id="3.30.110.10">
    <property type="entry name" value="Translation initiation factor 3 (IF-3), C-terminal domain"/>
    <property type="match status" value="1"/>
</dbReference>
<dbReference type="Gene3D" id="3.10.20.80">
    <property type="entry name" value="Translation initiation factor 3 (IF-3), N-terminal domain"/>
    <property type="match status" value="1"/>
</dbReference>
<dbReference type="HAMAP" id="MF_00080">
    <property type="entry name" value="IF_3"/>
    <property type="match status" value="1"/>
</dbReference>
<dbReference type="InterPro" id="IPR036788">
    <property type="entry name" value="T_IF-3_C_sf"/>
</dbReference>
<dbReference type="InterPro" id="IPR036787">
    <property type="entry name" value="T_IF-3_N_sf"/>
</dbReference>
<dbReference type="InterPro" id="IPR001288">
    <property type="entry name" value="Translation_initiation_fac_3"/>
</dbReference>
<dbReference type="InterPro" id="IPR019815">
    <property type="entry name" value="Translation_initiation_fac_3_C"/>
</dbReference>
<dbReference type="InterPro" id="IPR019814">
    <property type="entry name" value="Translation_initiation_fac_3_N"/>
</dbReference>
<dbReference type="NCBIfam" id="TIGR00168">
    <property type="entry name" value="infC"/>
    <property type="match status" value="1"/>
</dbReference>
<dbReference type="PANTHER" id="PTHR10938">
    <property type="entry name" value="TRANSLATION INITIATION FACTOR IF-3"/>
    <property type="match status" value="1"/>
</dbReference>
<dbReference type="PANTHER" id="PTHR10938:SF0">
    <property type="entry name" value="TRANSLATION INITIATION FACTOR IF-3, MITOCHONDRIAL"/>
    <property type="match status" value="1"/>
</dbReference>
<dbReference type="Pfam" id="PF00707">
    <property type="entry name" value="IF3_C"/>
    <property type="match status" value="1"/>
</dbReference>
<dbReference type="Pfam" id="PF05198">
    <property type="entry name" value="IF3_N"/>
    <property type="match status" value="1"/>
</dbReference>
<dbReference type="SUPFAM" id="SSF55200">
    <property type="entry name" value="Translation initiation factor IF3, C-terminal domain"/>
    <property type="match status" value="1"/>
</dbReference>
<dbReference type="SUPFAM" id="SSF54364">
    <property type="entry name" value="Translation initiation factor IF3, N-terminal domain"/>
    <property type="match status" value="1"/>
</dbReference>